<feature type="chain" id="PRO_1000096647" description="DNA mismatch repair protein MutL">
    <location>
        <begin position="1"/>
        <end position="575"/>
    </location>
</feature>
<evidence type="ECO:0000255" key="1">
    <source>
        <dbReference type="HAMAP-Rule" id="MF_00149"/>
    </source>
</evidence>
<protein>
    <recommendedName>
        <fullName evidence="1">DNA mismatch repair protein MutL</fullName>
    </recommendedName>
</protein>
<proteinExistence type="inferred from homology"/>
<sequence>MGKVVLLPEELRNKIAAGEVVERPVSVVKELVENSIDAGATRIIVEFANGGETLISVIDDGEGMTREDAILALNRFATSKIKTEEDLYNIKTLGFRGEALASIASVSKMELRSKTELEDGVFIKVEGGVIKEVNLWQGSKGTVIKVSDLFYNVPARKKFLKSKATETNLIIDFVKRIAIAYPQISFQLIQDGKSKFITPGDGDLENLISLLFDIRVQESLISFQKREGDYCIEGFVSKPGKLIALKSQDYFYVNRRWVRNNTILQAIREGYKGRILDGYFPFSIIFLTVPYSEVDVNVHPTKREVKFQKEKEVYEFVFRSIREALDEEEKKFFINMKAPETESKEYKSDSQITLDREILSLPLEFKPYKSEKKLSEAVSEYIPLRSGFRIVGQIFDNYIILETKDKVYIIDQHAAHERIKYEELKEELNLGYIQNVEILFPVVIEVSEEEKILLDKYKDLLERFAFSWEDFGPYHIRIVKVPYEFLNFDSKSIENLFREIISDISEKDLSKLEDKIIKSMACHSAVRSGNILIREEMEMLIKLIFEKNIPLTCPHGRPYIWEISREDLERYFHRR</sequence>
<reference key="1">
    <citation type="journal article" date="2014" name="Genome Announc.">
        <title>Complete Genome Sequence of the Extreme Thermophile Dictyoglomus thermophilum H-6-12.</title>
        <authorList>
            <person name="Coil D.A."/>
            <person name="Badger J.H."/>
            <person name="Forberger H.C."/>
            <person name="Riggs F."/>
            <person name="Madupu R."/>
            <person name="Fedorova N."/>
            <person name="Ward N."/>
            <person name="Robb F.T."/>
            <person name="Eisen J.A."/>
        </authorList>
    </citation>
    <scope>NUCLEOTIDE SEQUENCE [LARGE SCALE GENOMIC DNA]</scope>
    <source>
        <strain>ATCC 35947 / DSM 3960 / H-6-12</strain>
    </source>
</reference>
<keyword id="KW-0227">DNA damage</keyword>
<keyword id="KW-0234">DNA repair</keyword>
<name>MUTL_DICT6</name>
<gene>
    <name evidence="1" type="primary">mutL</name>
    <name type="ordered locus">DICTH_0942</name>
</gene>
<dbReference type="EMBL" id="CP001146">
    <property type="protein sequence ID" value="ACI18289.1"/>
    <property type="molecule type" value="Genomic_DNA"/>
</dbReference>
<dbReference type="RefSeq" id="WP_012546921.1">
    <property type="nucleotide sequence ID" value="NC_011297.1"/>
</dbReference>
<dbReference type="SMR" id="B5YE42"/>
<dbReference type="STRING" id="309799.DICTH_0942"/>
<dbReference type="PaxDb" id="309799-DICTH_0942"/>
<dbReference type="KEGG" id="dth:DICTH_0942"/>
<dbReference type="eggNOG" id="COG0323">
    <property type="taxonomic scope" value="Bacteria"/>
</dbReference>
<dbReference type="HOGENOM" id="CLU_004131_4_1_0"/>
<dbReference type="OrthoDB" id="9763467at2"/>
<dbReference type="Proteomes" id="UP000001733">
    <property type="component" value="Chromosome"/>
</dbReference>
<dbReference type="GO" id="GO:0032300">
    <property type="term" value="C:mismatch repair complex"/>
    <property type="evidence" value="ECO:0007669"/>
    <property type="project" value="InterPro"/>
</dbReference>
<dbReference type="GO" id="GO:0005524">
    <property type="term" value="F:ATP binding"/>
    <property type="evidence" value="ECO:0007669"/>
    <property type="project" value="InterPro"/>
</dbReference>
<dbReference type="GO" id="GO:0016887">
    <property type="term" value="F:ATP hydrolysis activity"/>
    <property type="evidence" value="ECO:0007669"/>
    <property type="project" value="InterPro"/>
</dbReference>
<dbReference type="GO" id="GO:0140664">
    <property type="term" value="F:ATP-dependent DNA damage sensor activity"/>
    <property type="evidence" value="ECO:0007669"/>
    <property type="project" value="InterPro"/>
</dbReference>
<dbReference type="GO" id="GO:0030983">
    <property type="term" value="F:mismatched DNA binding"/>
    <property type="evidence" value="ECO:0007669"/>
    <property type="project" value="InterPro"/>
</dbReference>
<dbReference type="GO" id="GO:0006298">
    <property type="term" value="P:mismatch repair"/>
    <property type="evidence" value="ECO:0007669"/>
    <property type="project" value="UniProtKB-UniRule"/>
</dbReference>
<dbReference type="CDD" id="cd16926">
    <property type="entry name" value="HATPase_MutL-MLH-PMS-like"/>
    <property type="match status" value="1"/>
</dbReference>
<dbReference type="CDD" id="cd00782">
    <property type="entry name" value="MutL_Trans"/>
    <property type="match status" value="1"/>
</dbReference>
<dbReference type="FunFam" id="3.30.565.10:FF:000003">
    <property type="entry name" value="DNA mismatch repair endonuclease MutL"/>
    <property type="match status" value="1"/>
</dbReference>
<dbReference type="Gene3D" id="3.30.230.10">
    <property type="match status" value="1"/>
</dbReference>
<dbReference type="Gene3D" id="3.30.565.10">
    <property type="entry name" value="Histidine kinase-like ATPase, C-terminal domain"/>
    <property type="match status" value="1"/>
</dbReference>
<dbReference type="Gene3D" id="3.30.1540.20">
    <property type="entry name" value="MutL, C-terminal domain, dimerisation subdomain"/>
    <property type="match status" value="1"/>
</dbReference>
<dbReference type="Gene3D" id="3.30.1370.100">
    <property type="entry name" value="MutL, C-terminal domain, regulatory subdomain"/>
    <property type="match status" value="1"/>
</dbReference>
<dbReference type="HAMAP" id="MF_00149">
    <property type="entry name" value="DNA_mis_repair"/>
    <property type="match status" value="1"/>
</dbReference>
<dbReference type="InterPro" id="IPR014762">
    <property type="entry name" value="DNA_mismatch_repair_CS"/>
</dbReference>
<dbReference type="InterPro" id="IPR020667">
    <property type="entry name" value="DNA_mismatch_repair_MutL"/>
</dbReference>
<dbReference type="InterPro" id="IPR013507">
    <property type="entry name" value="DNA_mismatch_S5_2-like"/>
</dbReference>
<dbReference type="InterPro" id="IPR036890">
    <property type="entry name" value="HATPase_C_sf"/>
</dbReference>
<dbReference type="InterPro" id="IPR002099">
    <property type="entry name" value="MutL/Mlh/PMS"/>
</dbReference>
<dbReference type="InterPro" id="IPR038973">
    <property type="entry name" value="MutL/Mlh/Pms-like"/>
</dbReference>
<dbReference type="InterPro" id="IPR014790">
    <property type="entry name" value="MutL_C"/>
</dbReference>
<dbReference type="InterPro" id="IPR042120">
    <property type="entry name" value="MutL_C_dimsub"/>
</dbReference>
<dbReference type="InterPro" id="IPR042121">
    <property type="entry name" value="MutL_C_regsub"/>
</dbReference>
<dbReference type="InterPro" id="IPR037198">
    <property type="entry name" value="MutL_C_sf"/>
</dbReference>
<dbReference type="InterPro" id="IPR020568">
    <property type="entry name" value="Ribosomal_Su5_D2-typ_SF"/>
</dbReference>
<dbReference type="InterPro" id="IPR014721">
    <property type="entry name" value="Ribsml_uS5_D2-typ_fold_subgr"/>
</dbReference>
<dbReference type="NCBIfam" id="TIGR00585">
    <property type="entry name" value="mutl"/>
    <property type="match status" value="1"/>
</dbReference>
<dbReference type="PANTHER" id="PTHR10073">
    <property type="entry name" value="DNA MISMATCH REPAIR PROTEIN MLH, PMS, MUTL"/>
    <property type="match status" value="1"/>
</dbReference>
<dbReference type="PANTHER" id="PTHR10073:SF12">
    <property type="entry name" value="DNA MISMATCH REPAIR PROTEIN MLH1"/>
    <property type="match status" value="1"/>
</dbReference>
<dbReference type="Pfam" id="PF01119">
    <property type="entry name" value="DNA_mis_repair"/>
    <property type="match status" value="1"/>
</dbReference>
<dbReference type="Pfam" id="PF13589">
    <property type="entry name" value="HATPase_c_3"/>
    <property type="match status" value="1"/>
</dbReference>
<dbReference type="Pfam" id="PF08676">
    <property type="entry name" value="MutL_C"/>
    <property type="match status" value="1"/>
</dbReference>
<dbReference type="SMART" id="SM01340">
    <property type="entry name" value="DNA_mis_repair"/>
    <property type="match status" value="1"/>
</dbReference>
<dbReference type="SMART" id="SM00853">
    <property type="entry name" value="MutL_C"/>
    <property type="match status" value="1"/>
</dbReference>
<dbReference type="SUPFAM" id="SSF55874">
    <property type="entry name" value="ATPase domain of HSP90 chaperone/DNA topoisomerase II/histidine kinase"/>
    <property type="match status" value="1"/>
</dbReference>
<dbReference type="SUPFAM" id="SSF118116">
    <property type="entry name" value="DNA mismatch repair protein MutL"/>
    <property type="match status" value="1"/>
</dbReference>
<dbReference type="SUPFAM" id="SSF54211">
    <property type="entry name" value="Ribosomal protein S5 domain 2-like"/>
    <property type="match status" value="1"/>
</dbReference>
<dbReference type="PROSITE" id="PS00058">
    <property type="entry name" value="DNA_MISMATCH_REPAIR_1"/>
    <property type="match status" value="1"/>
</dbReference>
<organism>
    <name type="scientific">Dictyoglomus thermophilum (strain ATCC 35947 / DSM 3960 / H-6-12)</name>
    <dbReference type="NCBI Taxonomy" id="309799"/>
    <lineage>
        <taxon>Bacteria</taxon>
        <taxon>Pseudomonadati</taxon>
        <taxon>Dictyoglomota</taxon>
        <taxon>Dictyoglomia</taxon>
        <taxon>Dictyoglomales</taxon>
        <taxon>Dictyoglomaceae</taxon>
        <taxon>Dictyoglomus</taxon>
    </lineage>
</organism>
<comment type="function">
    <text evidence="1">This protein is involved in the repair of mismatches in DNA. It is required for dam-dependent methyl-directed DNA mismatch repair. May act as a 'molecular matchmaker', a protein that promotes the formation of a stable complex between two or more DNA-binding proteins in an ATP-dependent manner without itself being part of a final effector complex.</text>
</comment>
<comment type="similarity">
    <text evidence="1">Belongs to the DNA mismatch repair MutL/HexB family.</text>
</comment>
<accession>B5YE42</accession>